<name>RRF_GLUOX</name>
<accession>Q5FPZ4</accession>
<feature type="chain" id="PRO_0000167466" description="Ribosome-recycling factor">
    <location>
        <begin position="1"/>
        <end position="188"/>
    </location>
</feature>
<keyword id="KW-0963">Cytoplasm</keyword>
<keyword id="KW-0648">Protein biosynthesis</keyword>
<keyword id="KW-1185">Reference proteome</keyword>
<protein>
    <recommendedName>
        <fullName evidence="1">Ribosome-recycling factor</fullName>
        <shortName evidence="1">RRF</shortName>
    </recommendedName>
    <alternativeName>
        <fullName evidence="1">Ribosome-releasing factor</fullName>
    </alternativeName>
</protein>
<gene>
    <name evidence="1" type="primary">frr</name>
    <name type="ordered locus">GOX1813</name>
</gene>
<organism>
    <name type="scientific">Gluconobacter oxydans (strain 621H)</name>
    <name type="common">Gluconobacter suboxydans</name>
    <dbReference type="NCBI Taxonomy" id="290633"/>
    <lineage>
        <taxon>Bacteria</taxon>
        <taxon>Pseudomonadati</taxon>
        <taxon>Pseudomonadota</taxon>
        <taxon>Alphaproteobacteria</taxon>
        <taxon>Acetobacterales</taxon>
        <taxon>Acetobacteraceae</taxon>
        <taxon>Gluconobacter</taxon>
    </lineage>
</organism>
<evidence type="ECO:0000255" key="1">
    <source>
        <dbReference type="HAMAP-Rule" id="MF_00040"/>
    </source>
</evidence>
<reference key="1">
    <citation type="journal article" date="2005" name="Nat. Biotechnol.">
        <title>Complete genome sequence of the acetic acid bacterium Gluconobacter oxydans.</title>
        <authorList>
            <person name="Prust C."/>
            <person name="Hoffmeister M."/>
            <person name="Liesegang H."/>
            <person name="Wiezer A."/>
            <person name="Fricke W.F."/>
            <person name="Ehrenreich A."/>
            <person name="Gottschalk G."/>
            <person name="Deppenmeier U."/>
        </authorList>
    </citation>
    <scope>NUCLEOTIDE SEQUENCE [LARGE SCALE GENOMIC DNA]</scope>
    <source>
        <strain>621H</strain>
    </source>
</reference>
<proteinExistence type="inferred from homology"/>
<dbReference type="EMBL" id="CP000009">
    <property type="protein sequence ID" value="AAW61552.1"/>
    <property type="molecule type" value="Genomic_DNA"/>
</dbReference>
<dbReference type="RefSeq" id="WP_011253333.1">
    <property type="nucleotide sequence ID" value="NZ_LT900338.1"/>
</dbReference>
<dbReference type="SMR" id="Q5FPZ4"/>
<dbReference type="STRING" id="290633.GOX1813"/>
<dbReference type="KEGG" id="gox:GOX1813"/>
<dbReference type="eggNOG" id="COG0233">
    <property type="taxonomic scope" value="Bacteria"/>
</dbReference>
<dbReference type="HOGENOM" id="CLU_073981_2_0_5"/>
<dbReference type="Proteomes" id="UP000006375">
    <property type="component" value="Chromosome"/>
</dbReference>
<dbReference type="GO" id="GO:0005829">
    <property type="term" value="C:cytosol"/>
    <property type="evidence" value="ECO:0007669"/>
    <property type="project" value="GOC"/>
</dbReference>
<dbReference type="GO" id="GO:0043023">
    <property type="term" value="F:ribosomal large subunit binding"/>
    <property type="evidence" value="ECO:0007669"/>
    <property type="project" value="TreeGrafter"/>
</dbReference>
<dbReference type="GO" id="GO:0002184">
    <property type="term" value="P:cytoplasmic translational termination"/>
    <property type="evidence" value="ECO:0007669"/>
    <property type="project" value="TreeGrafter"/>
</dbReference>
<dbReference type="CDD" id="cd00520">
    <property type="entry name" value="RRF"/>
    <property type="match status" value="1"/>
</dbReference>
<dbReference type="FunFam" id="1.10.132.20:FF:000001">
    <property type="entry name" value="Ribosome-recycling factor"/>
    <property type="match status" value="1"/>
</dbReference>
<dbReference type="FunFam" id="3.30.1360.40:FF:000001">
    <property type="entry name" value="Ribosome-recycling factor"/>
    <property type="match status" value="1"/>
</dbReference>
<dbReference type="Gene3D" id="3.30.1360.40">
    <property type="match status" value="1"/>
</dbReference>
<dbReference type="Gene3D" id="1.10.132.20">
    <property type="entry name" value="Ribosome-recycling factor"/>
    <property type="match status" value="1"/>
</dbReference>
<dbReference type="HAMAP" id="MF_00040">
    <property type="entry name" value="RRF"/>
    <property type="match status" value="1"/>
</dbReference>
<dbReference type="InterPro" id="IPR002661">
    <property type="entry name" value="Ribosome_recyc_fac"/>
</dbReference>
<dbReference type="InterPro" id="IPR023584">
    <property type="entry name" value="Ribosome_recyc_fac_dom"/>
</dbReference>
<dbReference type="InterPro" id="IPR036191">
    <property type="entry name" value="RRF_sf"/>
</dbReference>
<dbReference type="NCBIfam" id="TIGR00496">
    <property type="entry name" value="frr"/>
    <property type="match status" value="1"/>
</dbReference>
<dbReference type="PANTHER" id="PTHR20982:SF3">
    <property type="entry name" value="MITOCHONDRIAL RIBOSOME RECYCLING FACTOR PSEUDO 1"/>
    <property type="match status" value="1"/>
</dbReference>
<dbReference type="PANTHER" id="PTHR20982">
    <property type="entry name" value="RIBOSOME RECYCLING FACTOR"/>
    <property type="match status" value="1"/>
</dbReference>
<dbReference type="Pfam" id="PF01765">
    <property type="entry name" value="RRF"/>
    <property type="match status" value="1"/>
</dbReference>
<dbReference type="SUPFAM" id="SSF55194">
    <property type="entry name" value="Ribosome recycling factor, RRF"/>
    <property type="match status" value="1"/>
</dbReference>
<sequence>MSAALNDLLADLTRRMDGAIESLRRDLSGLRSGRASPNLLEPVRVEAYGSEVPLSQVGSIAVPEARMLTVSVWDRTVVGAVERAIRDSGLGLNPSTDGQTVRVPIPALTEERRNELARAASRYAENGKISVRGVRRDGMEQTKALEKKSEISQDDMKTWTDAIQKLTDQYIKKVDDIFADKEREIKQV</sequence>
<comment type="function">
    <text evidence="1">Responsible for the release of ribosomes from messenger RNA at the termination of protein biosynthesis. May increase the efficiency of translation by recycling ribosomes from one round of translation to another.</text>
</comment>
<comment type="subcellular location">
    <subcellularLocation>
        <location evidence="1">Cytoplasm</location>
    </subcellularLocation>
</comment>
<comment type="similarity">
    <text evidence="1">Belongs to the RRF family.</text>
</comment>